<sequence>MRPPDDQINNNVGSNSHLEKLKEAMDHQLQKSSKIVGSFTNSQNSSVGSVHSPILESPTSLNRQHRNSFSFNNVSSPSLEDERLINFPRVNPNRLMTSKRPNELFKTSSMSSDCYSPQKSRESLNSLCHSPAPSVSSCGNALNNDNTSASHSLTDEQPFETDSSANLFKQLQEKRNRTIGNVYEMACLLVFKTGLMNFWKNIIDFFAQQFFSTQISVVEPRDLSDIYNTPWQLRCYYDGGSHYDPYSNPISVNDNLASSSYVTVVASDGSKGIIYKDPASLKHEGDLLIDSKVVQTVLERATLLVYTRKQQHIVKNTKVHDNDYFSSIPNVDDIRSIKNSWKVFHDEKLNELKKQVEISASAAQLNGLYPQKKRAFVSHFSQNRKPYSQSDISKAQSSSFSEEPSNIYDEYEQNLLSPWSRSPVASPSIQTDPNRNPFFQNCLQESSFATESSTEKSASESVSETAVNDDCKGMNFSGNRRQEDHLNDFTSFPTETAVSIVHVPLMFPCSDQTSSRGRAPIAILSFKSNLVPYPENLIASIERLIPFIFSSYSNSQSVPLLPCPTQRHLLFNTSSTDNTKELSMSASSENSDCPHKEGECVGSFCNINAKGSSLNNIPKLPRFVPVPSEFFKKNQRSWVTLKKHRLLARLKSRISKKNSKVNENLRFSLNDGENYSNETITLKKDEIVLDKSKSYACCTSESHKYVQGHCGGQAPPFPLLKVIIDSIPVHVFTADPGSGKLTWVNRKTLLYCGLNMNEQIELQFSRIHPDDLPNFLNDWKSSLFSGSGFYHEIRLQRFDNVYRYFICRAVPLRDCTGSVLHFFGTMTDVHDQKLAERELQKQSAIAANENSYRSLAEASPQIVFAANGKNGIIYANAQWLSYSGLSLESSLGLGFLSAVYHADRKKCLLPESLEGTFNNQDESNGTKTFAAEIRFRSTDGHYRWHLVKSVCVNNSADTSTNLWLGTCTDIHDHKMLEEKLQESNIEAQRIVRSKMQYLSNMSHEIRTPLIGITGMVSFLLETQMSAEQLSYARIIQQSAKSLLTVINDILDLSKVRAGMMKLTSQRFSVRAMMEDANETLGTLAFSKGIELNYTVDIDVPDIVFGDNMRMRQVALNVIGNAIKFTNVGEVFTRCSVEKIDYSTNTVVLKWECIDTGQGFNRDDQLQMFKPFSQVESSTLPRHGGSGLGLVISKELVELHNGSMSCQSRRGVGTRFMWTATFTMDKTPLKFEPPDGCCPVCFCPYEKSKQSTEDYYCADDGNDKSATNFVKLAVNKADPGRESNRRKLESDKNVQSNKYVNPFASESEFCRCGASADPYTVLFWRLYRNKPSGIKLDKSALAVVVSHTKYSSEAIGNMLQSIIDISSFKDIVRYGNTYEAFEELLENPMQSKVTHIILNLPDIEAYVLFVKSLQLCSLYKDTKFILVTSTRQKESLSKIFSDSEDCNSESIHYVLKLVKPSKFFPLFYSDSEEKGKIGALNDMTRKAAMEQKADAETLRYNLAKSGFSVLLAEDNIINIKVISRYLERIGVKFKVTMDGLQCVEEWKREKPNFYSLILMDLQMPVMDGYQACNEIRKYELENDYPKVPIVALSANALPHVVLSCKDSGFDSYLAKPITLQHLSLIISGILNYTNQSKLHK</sequence>
<gene>
    <name type="primary">mak1</name>
    <name type="synonym">phk3</name>
    <name type="ORF">SPAC1834.08</name>
</gene>
<proteinExistence type="inferred from homology"/>
<keyword id="KW-0067">ATP-binding</keyword>
<keyword id="KW-0963">Cytoplasm</keyword>
<keyword id="KW-0418">Kinase</keyword>
<keyword id="KW-0547">Nucleotide-binding</keyword>
<keyword id="KW-0597">Phosphoprotein</keyword>
<keyword id="KW-1185">Reference proteome</keyword>
<keyword id="KW-0677">Repeat</keyword>
<keyword id="KW-0808">Transferase</keyword>
<keyword id="KW-0902">Two-component regulatory system</keyword>
<name>MAK1_SCHPO</name>
<feature type="chain" id="PRO_0000081408" description="Peroxide stress-activated histidine kinase mak1">
    <location>
        <begin position="1"/>
        <end position="1639"/>
    </location>
</feature>
<feature type="domain" description="PAS 1" evidence="2">
    <location>
        <begin position="716"/>
        <end position="786"/>
    </location>
</feature>
<feature type="domain" description="PAC 1" evidence="3">
    <location>
        <begin position="789"/>
        <end position="841"/>
    </location>
</feature>
<feature type="domain" description="PAS 2" evidence="2">
    <location>
        <begin position="848"/>
        <end position="920"/>
    </location>
</feature>
<feature type="domain" description="PAC 2" evidence="3">
    <location>
        <begin position="929"/>
        <end position="982"/>
    </location>
</feature>
<feature type="domain" description="Histidine kinase" evidence="1">
    <location>
        <begin position="1000"/>
        <end position="1223"/>
    </location>
</feature>
<feature type="domain" description="Response regulatory" evidence="4">
    <location>
        <begin position="1507"/>
        <end position="1629"/>
    </location>
</feature>
<feature type="region of interest" description="Disordered" evidence="5">
    <location>
        <begin position="38"/>
        <end position="76"/>
    </location>
</feature>
<feature type="compositionally biased region" description="Polar residues" evidence="5">
    <location>
        <begin position="38"/>
        <end position="49"/>
    </location>
</feature>
<feature type="compositionally biased region" description="Low complexity" evidence="5">
    <location>
        <begin position="67"/>
        <end position="76"/>
    </location>
</feature>
<feature type="modified residue" description="Phosphohistidine; by autocatalysis" evidence="1">
    <location>
        <position position="1003"/>
    </location>
</feature>
<feature type="modified residue" description="4-aspartylphosphate" evidence="4">
    <location>
        <position position="1559"/>
    </location>
</feature>
<dbReference type="EC" id="2.7.13.3"/>
<dbReference type="EMBL" id="CU329670">
    <property type="protein sequence ID" value="CAB75776.1"/>
    <property type="molecule type" value="Genomic_DNA"/>
</dbReference>
<dbReference type="PIR" id="T50119">
    <property type="entry name" value="T50119"/>
</dbReference>
<dbReference type="RefSeq" id="NP_594687.1">
    <property type="nucleotide sequence ID" value="NM_001020116.2"/>
</dbReference>
<dbReference type="SMR" id="Q9P7Q7"/>
<dbReference type="BioGRID" id="278595">
    <property type="interactions" value="31"/>
</dbReference>
<dbReference type="STRING" id="284812.Q9P7Q7"/>
<dbReference type="iPTMnet" id="Q9P7Q7"/>
<dbReference type="PaxDb" id="4896-SPAC1834.08.1"/>
<dbReference type="EnsemblFungi" id="SPAC1834.08.1">
    <property type="protein sequence ID" value="SPAC1834.08.1:pep"/>
    <property type="gene ID" value="SPAC1834.08"/>
</dbReference>
<dbReference type="GeneID" id="2542119"/>
<dbReference type="KEGG" id="spo:2542119"/>
<dbReference type="PomBase" id="SPAC1834.08">
    <property type="gene designation" value="mak1"/>
</dbReference>
<dbReference type="VEuPathDB" id="FungiDB:SPAC1834.08"/>
<dbReference type="eggNOG" id="KOG0519">
    <property type="taxonomic scope" value="Eukaryota"/>
</dbReference>
<dbReference type="HOGENOM" id="CLU_000263_2_0_1"/>
<dbReference type="InParanoid" id="Q9P7Q7"/>
<dbReference type="OMA" id="WGQKATF"/>
<dbReference type="PhylomeDB" id="Q9P7Q7"/>
<dbReference type="PRO" id="PR:Q9P7Q7"/>
<dbReference type="Proteomes" id="UP000002485">
    <property type="component" value="Chromosome I"/>
</dbReference>
<dbReference type="GO" id="GO:0032153">
    <property type="term" value="C:cell division site"/>
    <property type="evidence" value="ECO:0007005"/>
    <property type="project" value="PomBase"/>
</dbReference>
<dbReference type="GO" id="GO:0051286">
    <property type="term" value="C:cell tip"/>
    <property type="evidence" value="ECO:0007005"/>
    <property type="project" value="PomBase"/>
</dbReference>
<dbReference type="GO" id="GO:0005737">
    <property type="term" value="C:cytoplasm"/>
    <property type="evidence" value="ECO:0000314"/>
    <property type="project" value="PomBase"/>
</dbReference>
<dbReference type="GO" id="GO:0005829">
    <property type="term" value="C:cytosol"/>
    <property type="evidence" value="ECO:0007005"/>
    <property type="project" value="PomBase"/>
</dbReference>
<dbReference type="GO" id="GO:0005524">
    <property type="term" value="F:ATP binding"/>
    <property type="evidence" value="ECO:0007669"/>
    <property type="project" value="UniProtKB-KW"/>
</dbReference>
<dbReference type="GO" id="GO:0000155">
    <property type="term" value="F:phosphorelay sensor kinase activity"/>
    <property type="evidence" value="ECO:0000304"/>
    <property type="project" value="PomBase"/>
</dbReference>
<dbReference type="GO" id="GO:0000160">
    <property type="term" value="P:phosphorelay signal transduction system"/>
    <property type="evidence" value="ECO:0000315"/>
    <property type="project" value="PomBase"/>
</dbReference>
<dbReference type="CDD" id="cd16922">
    <property type="entry name" value="HATPase_EvgS-ArcB-TorS-like"/>
    <property type="match status" value="1"/>
</dbReference>
<dbReference type="CDD" id="cd00082">
    <property type="entry name" value="HisKA"/>
    <property type="match status" value="1"/>
</dbReference>
<dbReference type="CDD" id="cd00130">
    <property type="entry name" value="PAS"/>
    <property type="match status" value="2"/>
</dbReference>
<dbReference type="CDD" id="cd17546">
    <property type="entry name" value="REC_hyHK_CKI1_RcsC-like"/>
    <property type="match status" value="1"/>
</dbReference>
<dbReference type="FunFam" id="3.30.565.10:FF:000010">
    <property type="entry name" value="Sensor histidine kinase RcsC"/>
    <property type="match status" value="1"/>
</dbReference>
<dbReference type="FunFam" id="3.30.450.20:FF:000053">
    <property type="entry name" value="Sensor histidine kinase/response regulator"/>
    <property type="match status" value="1"/>
</dbReference>
<dbReference type="Gene3D" id="1.10.287.130">
    <property type="match status" value="1"/>
</dbReference>
<dbReference type="Gene3D" id="3.40.50.2300">
    <property type="match status" value="1"/>
</dbReference>
<dbReference type="Gene3D" id="3.30.565.10">
    <property type="entry name" value="Histidine kinase-like ATPase, C-terminal domain"/>
    <property type="match status" value="1"/>
</dbReference>
<dbReference type="Gene3D" id="3.30.450.20">
    <property type="entry name" value="PAS domain"/>
    <property type="match status" value="2"/>
</dbReference>
<dbReference type="InterPro" id="IPR011006">
    <property type="entry name" value="CheY-like_superfamily"/>
</dbReference>
<dbReference type="InterPro" id="IPR036890">
    <property type="entry name" value="HATPase_C_sf"/>
</dbReference>
<dbReference type="InterPro" id="IPR005467">
    <property type="entry name" value="His_kinase_dom"/>
</dbReference>
<dbReference type="InterPro" id="IPR003661">
    <property type="entry name" value="HisK_dim/P_dom"/>
</dbReference>
<dbReference type="InterPro" id="IPR036097">
    <property type="entry name" value="HisK_dim/P_sf"/>
</dbReference>
<dbReference type="InterPro" id="IPR001610">
    <property type="entry name" value="PAC"/>
</dbReference>
<dbReference type="InterPro" id="IPR000014">
    <property type="entry name" value="PAS"/>
</dbReference>
<dbReference type="InterPro" id="IPR000700">
    <property type="entry name" value="PAS-assoc_C"/>
</dbReference>
<dbReference type="InterPro" id="IPR035965">
    <property type="entry name" value="PAS-like_dom_sf"/>
</dbReference>
<dbReference type="InterPro" id="IPR013655">
    <property type="entry name" value="PAS_fold_3"/>
</dbReference>
<dbReference type="InterPro" id="IPR004358">
    <property type="entry name" value="Sig_transdc_His_kin-like_C"/>
</dbReference>
<dbReference type="InterPro" id="IPR001789">
    <property type="entry name" value="Sig_transdc_resp-reg_receiver"/>
</dbReference>
<dbReference type="NCBIfam" id="TIGR00229">
    <property type="entry name" value="sensory_box"/>
    <property type="match status" value="1"/>
</dbReference>
<dbReference type="PANTHER" id="PTHR43047:SF72">
    <property type="entry name" value="OSMOSENSING HISTIDINE PROTEIN KINASE SLN1"/>
    <property type="match status" value="1"/>
</dbReference>
<dbReference type="PANTHER" id="PTHR43047">
    <property type="entry name" value="TWO-COMPONENT HISTIDINE PROTEIN KINASE"/>
    <property type="match status" value="1"/>
</dbReference>
<dbReference type="Pfam" id="PF02518">
    <property type="entry name" value="HATPase_c"/>
    <property type="match status" value="1"/>
</dbReference>
<dbReference type="Pfam" id="PF00512">
    <property type="entry name" value="HisKA"/>
    <property type="match status" value="1"/>
</dbReference>
<dbReference type="Pfam" id="PF08447">
    <property type="entry name" value="PAS_3"/>
    <property type="match status" value="1"/>
</dbReference>
<dbReference type="Pfam" id="PF13188">
    <property type="entry name" value="PAS_8"/>
    <property type="match status" value="1"/>
</dbReference>
<dbReference type="Pfam" id="PF00072">
    <property type="entry name" value="Response_reg"/>
    <property type="match status" value="1"/>
</dbReference>
<dbReference type="PRINTS" id="PR00344">
    <property type="entry name" value="BCTRLSENSOR"/>
</dbReference>
<dbReference type="SMART" id="SM00387">
    <property type="entry name" value="HATPase_c"/>
    <property type="match status" value="1"/>
</dbReference>
<dbReference type="SMART" id="SM00388">
    <property type="entry name" value="HisKA"/>
    <property type="match status" value="1"/>
</dbReference>
<dbReference type="SMART" id="SM00086">
    <property type="entry name" value="PAC"/>
    <property type="match status" value="2"/>
</dbReference>
<dbReference type="SMART" id="SM00091">
    <property type="entry name" value="PAS"/>
    <property type="match status" value="2"/>
</dbReference>
<dbReference type="SMART" id="SM00448">
    <property type="entry name" value="REC"/>
    <property type="match status" value="1"/>
</dbReference>
<dbReference type="SUPFAM" id="SSF55874">
    <property type="entry name" value="ATPase domain of HSP90 chaperone/DNA topoisomerase II/histidine kinase"/>
    <property type="match status" value="1"/>
</dbReference>
<dbReference type="SUPFAM" id="SSF52172">
    <property type="entry name" value="CheY-like"/>
    <property type="match status" value="1"/>
</dbReference>
<dbReference type="SUPFAM" id="SSF47384">
    <property type="entry name" value="Homodimeric domain of signal transducing histidine kinase"/>
    <property type="match status" value="1"/>
</dbReference>
<dbReference type="SUPFAM" id="SSF55785">
    <property type="entry name" value="PYP-like sensor domain (PAS domain)"/>
    <property type="match status" value="2"/>
</dbReference>
<dbReference type="PROSITE" id="PS50109">
    <property type="entry name" value="HIS_KIN"/>
    <property type="match status" value="1"/>
</dbReference>
<dbReference type="PROSITE" id="PS50113">
    <property type="entry name" value="PAC"/>
    <property type="match status" value="2"/>
</dbReference>
<dbReference type="PROSITE" id="PS50112">
    <property type="entry name" value="PAS"/>
    <property type="match status" value="1"/>
</dbReference>
<dbReference type="PROSITE" id="PS50110">
    <property type="entry name" value="RESPONSE_REGULATORY"/>
    <property type="match status" value="1"/>
</dbReference>
<organism>
    <name type="scientific">Schizosaccharomyces pombe (strain 972 / ATCC 24843)</name>
    <name type="common">Fission yeast</name>
    <dbReference type="NCBI Taxonomy" id="284812"/>
    <lineage>
        <taxon>Eukaryota</taxon>
        <taxon>Fungi</taxon>
        <taxon>Dikarya</taxon>
        <taxon>Ascomycota</taxon>
        <taxon>Taphrinomycotina</taxon>
        <taxon>Schizosaccharomycetes</taxon>
        <taxon>Schizosaccharomycetales</taxon>
        <taxon>Schizosaccharomycetaceae</taxon>
        <taxon>Schizosaccharomyces</taxon>
    </lineage>
</organism>
<reference key="1">
    <citation type="journal article" date="2001" name="Mol. Biol. Cell">
        <title>Peroxide sensors for the fission yeast stress-activated mitogen-activated protein kinase pathway.</title>
        <authorList>
            <person name="Buck V."/>
            <person name="Quinn J."/>
            <person name="Soto Pino T."/>
            <person name="Martin H."/>
            <person name="Saldanha J."/>
            <person name="Makino K."/>
            <person name="Morgan B.A."/>
            <person name="Millar J.B.A."/>
        </authorList>
    </citation>
    <scope>NUCLEOTIDE SEQUENCE [GENOMIC DNA]</scope>
    <scope>FUNCTION</scope>
</reference>
<reference key="2">
    <citation type="journal article" date="2001" name="Biosci. Biotechnol. Biochem.">
        <title>Genetic analysis of the His-to-Asp phosphorelay implicated in mitotic cell cycle control: involvement of histidine-kinase genes of Schizosaccharomyces pombe.</title>
        <authorList>
            <person name="Aoyama K."/>
            <person name="Aiba H."/>
            <person name="Mizuno T."/>
        </authorList>
    </citation>
    <scope>NUCLEOTIDE SEQUENCE [GENOMIC DNA]</scope>
    <scope>FUNCTION</scope>
</reference>
<reference key="3">
    <citation type="journal article" date="2002" name="Nature">
        <title>The genome sequence of Schizosaccharomyces pombe.</title>
        <authorList>
            <person name="Wood V."/>
            <person name="Gwilliam R."/>
            <person name="Rajandream M.A."/>
            <person name="Lyne M.H."/>
            <person name="Lyne R."/>
            <person name="Stewart A."/>
            <person name="Sgouros J.G."/>
            <person name="Peat N."/>
            <person name="Hayles J."/>
            <person name="Baker S.G."/>
            <person name="Basham D."/>
            <person name="Bowman S."/>
            <person name="Brooks K."/>
            <person name="Brown D."/>
            <person name="Brown S."/>
            <person name="Chillingworth T."/>
            <person name="Churcher C.M."/>
            <person name="Collins M."/>
            <person name="Connor R."/>
            <person name="Cronin A."/>
            <person name="Davis P."/>
            <person name="Feltwell T."/>
            <person name="Fraser A."/>
            <person name="Gentles S."/>
            <person name="Goble A."/>
            <person name="Hamlin N."/>
            <person name="Harris D.E."/>
            <person name="Hidalgo J."/>
            <person name="Hodgson G."/>
            <person name="Holroyd S."/>
            <person name="Hornsby T."/>
            <person name="Howarth S."/>
            <person name="Huckle E.J."/>
            <person name="Hunt S."/>
            <person name="Jagels K."/>
            <person name="James K.D."/>
            <person name="Jones L."/>
            <person name="Jones M."/>
            <person name="Leather S."/>
            <person name="McDonald S."/>
            <person name="McLean J."/>
            <person name="Mooney P."/>
            <person name="Moule S."/>
            <person name="Mungall K.L."/>
            <person name="Murphy L.D."/>
            <person name="Niblett D."/>
            <person name="Odell C."/>
            <person name="Oliver K."/>
            <person name="O'Neil S."/>
            <person name="Pearson D."/>
            <person name="Quail M.A."/>
            <person name="Rabbinowitsch E."/>
            <person name="Rutherford K.M."/>
            <person name="Rutter S."/>
            <person name="Saunders D."/>
            <person name="Seeger K."/>
            <person name="Sharp S."/>
            <person name="Skelton J."/>
            <person name="Simmonds M.N."/>
            <person name="Squares R."/>
            <person name="Squares S."/>
            <person name="Stevens K."/>
            <person name="Taylor K."/>
            <person name="Taylor R.G."/>
            <person name="Tivey A."/>
            <person name="Walsh S.V."/>
            <person name="Warren T."/>
            <person name="Whitehead S."/>
            <person name="Woodward J.R."/>
            <person name="Volckaert G."/>
            <person name="Aert R."/>
            <person name="Robben J."/>
            <person name="Grymonprez B."/>
            <person name="Weltjens I."/>
            <person name="Vanstreels E."/>
            <person name="Rieger M."/>
            <person name="Schaefer M."/>
            <person name="Mueller-Auer S."/>
            <person name="Gabel C."/>
            <person name="Fuchs M."/>
            <person name="Duesterhoeft A."/>
            <person name="Fritzc C."/>
            <person name="Holzer E."/>
            <person name="Moestl D."/>
            <person name="Hilbert H."/>
            <person name="Borzym K."/>
            <person name="Langer I."/>
            <person name="Beck A."/>
            <person name="Lehrach H."/>
            <person name="Reinhardt R."/>
            <person name="Pohl T.M."/>
            <person name="Eger P."/>
            <person name="Zimmermann W."/>
            <person name="Wedler H."/>
            <person name="Wambutt R."/>
            <person name="Purnelle B."/>
            <person name="Goffeau A."/>
            <person name="Cadieu E."/>
            <person name="Dreano S."/>
            <person name="Gloux S."/>
            <person name="Lelaure V."/>
            <person name="Mottier S."/>
            <person name="Galibert F."/>
            <person name="Aves S.J."/>
            <person name="Xiang Z."/>
            <person name="Hunt C."/>
            <person name="Moore K."/>
            <person name="Hurst S.M."/>
            <person name="Lucas M."/>
            <person name="Rochet M."/>
            <person name="Gaillardin C."/>
            <person name="Tallada V.A."/>
            <person name="Garzon A."/>
            <person name="Thode G."/>
            <person name="Daga R.R."/>
            <person name="Cruzado L."/>
            <person name="Jimenez J."/>
            <person name="Sanchez M."/>
            <person name="del Rey F."/>
            <person name="Benito J."/>
            <person name="Dominguez A."/>
            <person name="Revuelta J.L."/>
            <person name="Moreno S."/>
            <person name="Armstrong J."/>
            <person name="Forsburg S.L."/>
            <person name="Cerutti L."/>
            <person name="Lowe T."/>
            <person name="McCombie W.R."/>
            <person name="Paulsen I."/>
            <person name="Potashkin J."/>
            <person name="Shpakovski G.V."/>
            <person name="Ussery D."/>
            <person name="Barrell B.G."/>
            <person name="Nurse P."/>
        </authorList>
    </citation>
    <scope>NUCLEOTIDE SEQUENCE [LARGE SCALE GENOMIC DNA]</scope>
    <source>
        <strain>972 / ATCC 24843</strain>
    </source>
</reference>
<evidence type="ECO:0000255" key="1">
    <source>
        <dbReference type="PROSITE-ProRule" id="PRU00107"/>
    </source>
</evidence>
<evidence type="ECO:0000255" key="2">
    <source>
        <dbReference type="PROSITE-ProRule" id="PRU00140"/>
    </source>
</evidence>
<evidence type="ECO:0000255" key="3">
    <source>
        <dbReference type="PROSITE-ProRule" id="PRU00141"/>
    </source>
</evidence>
<evidence type="ECO:0000255" key="4">
    <source>
        <dbReference type="PROSITE-ProRule" id="PRU00169"/>
    </source>
</evidence>
<evidence type="ECO:0000256" key="5">
    <source>
        <dbReference type="SAM" id="MobiDB-lite"/>
    </source>
</evidence>
<evidence type="ECO:0000269" key="6">
    <source>
    </source>
</evidence>
<evidence type="ECO:0000269" key="7">
    <source>
    </source>
</evidence>
<evidence type="ECO:0000305" key="8"/>
<accession>Q9P7Q7</accession>
<comment type="function">
    <text evidence="6 7">Involved in the control of the SAPK-dependent transcriptional response to peroxide stress. Also has a role in G2/M regulation.</text>
</comment>
<comment type="catalytic activity">
    <reaction>
        <text>ATP + protein L-histidine = ADP + protein N-phospho-L-histidine.</text>
        <dbReference type="EC" id="2.7.13.3"/>
    </reaction>
</comment>
<comment type="subcellular location">
    <subcellularLocation>
        <location evidence="8">Cytoplasm</location>
    </subcellularLocation>
</comment>
<protein>
    <recommendedName>
        <fullName>Peroxide stress-activated histidine kinase mak1</fullName>
        <ecNumber>2.7.13.3</ecNumber>
    </recommendedName>
    <alternativeName>
        <fullName>His-Asp phosphorelay kinase phk3</fullName>
    </alternativeName>
    <alternativeName>
        <fullName>Mcs4-associated kinase 1</fullName>
    </alternativeName>
</protein>